<keyword id="KW-0963">Cytoplasm</keyword>
<keyword id="KW-0539">Nucleus</keyword>
<keyword id="KW-0647">Proteasome</keyword>
<keyword id="KW-1185">Reference proteome</keyword>
<comment type="function">
    <text evidence="1">The proteasome is a multicatalytic proteinase complex which is characterized by its ability to cleave peptides with Arg, Phe, Tyr, Leu, and Glu adjacent to the leaving group at neutral or slightly basic pH. The proteasome has an ATP-dependent proteolytic activity (By similarity).</text>
</comment>
<comment type="subunit">
    <text evidence="1">The 26S proteasome consists of a 20S proteasome core and two 19S regulatory subunits. The 20S proteasome core is composed of 28 subunits that are arranged in four stacked rings, resulting in a barrel-shaped structure. The two end rings are each formed by seven alpha subunits, and the two central rings are each formed by seven beta subunits. The catalytic chamber with the active sites is on the inside of the barrel (By similarity).</text>
</comment>
<comment type="subcellular location">
    <subcellularLocation>
        <location evidence="1">Cytoplasm</location>
    </subcellularLocation>
    <subcellularLocation>
        <location evidence="1">Nucleus</location>
    </subcellularLocation>
</comment>
<comment type="similarity">
    <text evidence="2">Belongs to the peptidase T1A family.</text>
</comment>
<comment type="sequence caution" evidence="3">
    <conflict type="erroneous gene model prediction">
        <sequence resource="EMBL-CDS" id="EAA34300"/>
    </conflict>
</comment>
<gene>
    <name type="primary">pca-2</name>
    <name type="ORF">B14D6.510</name>
    <name type="ORF">NCU06764</name>
</gene>
<sequence>MADRYSFSLTTFSPSGKLVQIEYALNAVNQGVTALGIKATNGIVLATEKKSSSPLADPSSLSKISLITPNIGMVYSGMGPDYRVLVDRARKVSHTGYKRIYNEYPPTRILVQDVARVMQEATQSGGVRPYGVSLLIAGWDEGGPMLYQVDPSGSYFPWKATAIGKNATTAKTFLEKRYTEGLELEDAVHIALLTLKETIEGEMNGDTIEIGIVGPPADHLLGVEGVEGAKGPRFRKLSPQEIEDYLTNL</sequence>
<name>PSA2_NEUCR</name>
<reference key="1">
    <citation type="journal article" date="2003" name="Nucleic Acids Res.">
        <title>What's in the genome of a filamentous fungus? Analysis of the Neurospora genome sequence.</title>
        <authorList>
            <person name="Mannhaupt G."/>
            <person name="Montrone C."/>
            <person name="Haase D."/>
            <person name="Mewes H.-W."/>
            <person name="Aign V."/>
            <person name="Hoheisel J.D."/>
            <person name="Fartmann B."/>
            <person name="Nyakatura G."/>
            <person name="Kempken F."/>
            <person name="Maier J."/>
            <person name="Schulte U."/>
        </authorList>
    </citation>
    <scope>NUCLEOTIDE SEQUENCE [LARGE SCALE GENOMIC DNA]</scope>
    <source>
        <strain>ATCC 24698 / 74-OR23-1A / CBS 708.71 / DSM 1257 / FGSC 987</strain>
    </source>
</reference>
<reference key="2">
    <citation type="journal article" date="2003" name="Nature">
        <title>The genome sequence of the filamentous fungus Neurospora crassa.</title>
        <authorList>
            <person name="Galagan J.E."/>
            <person name="Calvo S.E."/>
            <person name="Borkovich K.A."/>
            <person name="Selker E.U."/>
            <person name="Read N.D."/>
            <person name="Jaffe D.B."/>
            <person name="FitzHugh W."/>
            <person name="Ma L.-J."/>
            <person name="Smirnov S."/>
            <person name="Purcell S."/>
            <person name="Rehman B."/>
            <person name="Elkins T."/>
            <person name="Engels R."/>
            <person name="Wang S."/>
            <person name="Nielsen C.B."/>
            <person name="Butler J."/>
            <person name="Endrizzi M."/>
            <person name="Qui D."/>
            <person name="Ianakiev P."/>
            <person name="Bell-Pedersen D."/>
            <person name="Nelson M.A."/>
            <person name="Werner-Washburne M."/>
            <person name="Selitrennikoff C.P."/>
            <person name="Kinsey J.A."/>
            <person name="Braun E.L."/>
            <person name="Zelter A."/>
            <person name="Schulte U."/>
            <person name="Kothe G.O."/>
            <person name="Jedd G."/>
            <person name="Mewes H.-W."/>
            <person name="Staben C."/>
            <person name="Marcotte E."/>
            <person name="Greenberg D."/>
            <person name="Roy A."/>
            <person name="Foley K."/>
            <person name="Naylor J."/>
            <person name="Stange-Thomann N."/>
            <person name="Barrett R."/>
            <person name="Gnerre S."/>
            <person name="Kamal M."/>
            <person name="Kamvysselis M."/>
            <person name="Mauceli E.W."/>
            <person name="Bielke C."/>
            <person name="Rudd S."/>
            <person name="Frishman D."/>
            <person name="Krystofova S."/>
            <person name="Rasmussen C."/>
            <person name="Metzenberg R.L."/>
            <person name="Perkins D.D."/>
            <person name="Kroken S."/>
            <person name="Cogoni C."/>
            <person name="Macino G."/>
            <person name="Catcheside D.E.A."/>
            <person name="Li W."/>
            <person name="Pratt R.J."/>
            <person name="Osmani S.A."/>
            <person name="DeSouza C.P.C."/>
            <person name="Glass N.L."/>
            <person name="Orbach M.J."/>
            <person name="Berglund J.A."/>
            <person name="Voelker R."/>
            <person name="Yarden O."/>
            <person name="Plamann M."/>
            <person name="Seiler S."/>
            <person name="Dunlap J.C."/>
            <person name="Radford A."/>
            <person name="Aramayo R."/>
            <person name="Natvig D.O."/>
            <person name="Alex L.A."/>
            <person name="Mannhaupt G."/>
            <person name="Ebbole D.J."/>
            <person name="Freitag M."/>
            <person name="Paulsen I."/>
            <person name="Sachs M.S."/>
            <person name="Lander E.S."/>
            <person name="Nusbaum C."/>
            <person name="Birren B.W."/>
        </authorList>
    </citation>
    <scope>NUCLEOTIDE SEQUENCE [LARGE SCALE GENOMIC DNA]</scope>
    <source>
        <strain>ATCC 24698 / 74-OR23-1A / CBS 708.71 / DSM 1257 / FGSC 987</strain>
    </source>
</reference>
<protein>
    <recommendedName>
        <fullName>Probable proteasome subunit alpha type-2</fullName>
    </recommendedName>
</protein>
<evidence type="ECO:0000250" key="1"/>
<evidence type="ECO:0000255" key="2">
    <source>
        <dbReference type="PROSITE-ProRule" id="PRU00808"/>
    </source>
</evidence>
<evidence type="ECO:0000305" key="3"/>
<proteinExistence type="inferred from homology"/>
<organism>
    <name type="scientific">Neurospora crassa (strain ATCC 24698 / 74-OR23-1A / CBS 708.71 / DSM 1257 / FGSC 987)</name>
    <dbReference type="NCBI Taxonomy" id="367110"/>
    <lineage>
        <taxon>Eukaryota</taxon>
        <taxon>Fungi</taxon>
        <taxon>Dikarya</taxon>
        <taxon>Ascomycota</taxon>
        <taxon>Pezizomycotina</taxon>
        <taxon>Sordariomycetes</taxon>
        <taxon>Sordariomycetidae</taxon>
        <taxon>Sordariales</taxon>
        <taxon>Sordariaceae</taxon>
        <taxon>Neurospora</taxon>
    </lineage>
</organism>
<accession>Q8X077</accession>
<accession>Q7SCC2</accession>
<feature type="chain" id="PRO_0000124088" description="Probable proteasome subunit alpha type-2">
    <location>
        <begin position="1"/>
        <end position="249"/>
    </location>
</feature>
<dbReference type="EMBL" id="AL356173">
    <property type="protein sequence ID" value="CAB91760.2"/>
    <property type="molecule type" value="Genomic_DNA"/>
</dbReference>
<dbReference type="EMBL" id="CM002237">
    <property type="protein sequence ID" value="EAA34300.2"/>
    <property type="status" value="ALT_SEQ"/>
    <property type="molecule type" value="Genomic_DNA"/>
</dbReference>
<dbReference type="RefSeq" id="XP_963536.2">
    <property type="nucleotide sequence ID" value="XM_958443.2"/>
</dbReference>
<dbReference type="SMR" id="Q8X077"/>
<dbReference type="FunCoup" id="Q8X077">
    <property type="interactions" value="1036"/>
</dbReference>
<dbReference type="STRING" id="367110.Q8X077"/>
<dbReference type="EnsemblFungi" id="EAA34300">
    <property type="protein sequence ID" value="EAA34300"/>
    <property type="gene ID" value="NCU06764"/>
</dbReference>
<dbReference type="GeneID" id="3879660"/>
<dbReference type="KEGG" id="ncr:NCU06764"/>
<dbReference type="HOGENOM" id="CLU_035750_4_1_1"/>
<dbReference type="InParanoid" id="Q8X077"/>
<dbReference type="OrthoDB" id="431557at2759"/>
<dbReference type="Proteomes" id="UP000001805">
    <property type="component" value="Chromosome 6, Linkage Group II"/>
</dbReference>
<dbReference type="GO" id="GO:0005634">
    <property type="term" value="C:nucleus"/>
    <property type="evidence" value="ECO:0007669"/>
    <property type="project" value="UniProtKB-SubCell"/>
</dbReference>
<dbReference type="GO" id="GO:0019773">
    <property type="term" value="C:proteasome core complex, alpha-subunit complex"/>
    <property type="evidence" value="ECO:0000250"/>
    <property type="project" value="UniProtKB"/>
</dbReference>
<dbReference type="GO" id="GO:0034515">
    <property type="term" value="C:proteasome storage granule"/>
    <property type="evidence" value="ECO:0007669"/>
    <property type="project" value="EnsemblFungi"/>
</dbReference>
<dbReference type="GO" id="GO:0010499">
    <property type="term" value="P:proteasomal ubiquitin-independent protein catabolic process"/>
    <property type="evidence" value="ECO:0007669"/>
    <property type="project" value="EnsemblFungi"/>
</dbReference>
<dbReference type="GO" id="GO:0043161">
    <property type="term" value="P:proteasome-mediated ubiquitin-dependent protein catabolic process"/>
    <property type="evidence" value="ECO:0000318"/>
    <property type="project" value="GO_Central"/>
</dbReference>
<dbReference type="CDD" id="cd03750">
    <property type="entry name" value="proteasome_alpha_type_2"/>
    <property type="match status" value="1"/>
</dbReference>
<dbReference type="FunFam" id="3.60.20.10:FF:000048">
    <property type="entry name" value="Proteasome subunit alpha type-2"/>
    <property type="match status" value="1"/>
</dbReference>
<dbReference type="Gene3D" id="3.60.20.10">
    <property type="entry name" value="Glutamine Phosphoribosylpyrophosphate, subunit 1, domain 1"/>
    <property type="match status" value="1"/>
</dbReference>
<dbReference type="InterPro" id="IPR029055">
    <property type="entry name" value="Ntn_hydrolases_N"/>
</dbReference>
<dbReference type="InterPro" id="IPR050115">
    <property type="entry name" value="Proteasome_alpha"/>
</dbReference>
<dbReference type="InterPro" id="IPR023332">
    <property type="entry name" value="Proteasome_alpha-type"/>
</dbReference>
<dbReference type="InterPro" id="IPR000426">
    <property type="entry name" value="Proteasome_asu_N"/>
</dbReference>
<dbReference type="InterPro" id="IPR001353">
    <property type="entry name" value="Proteasome_sua/b"/>
</dbReference>
<dbReference type="NCBIfam" id="NF003075">
    <property type="entry name" value="PRK03996.1"/>
    <property type="match status" value="1"/>
</dbReference>
<dbReference type="PANTHER" id="PTHR11599">
    <property type="entry name" value="PROTEASOME SUBUNIT ALPHA/BETA"/>
    <property type="match status" value="1"/>
</dbReference>
<dbReference type="Pfam" id="PF00227">
    <property type="entry name" value="Proteasome"/>
    <property type="match status" value="1"/>
</dbReference>
<dbReference type="Pfam" id="PF10584">
    <property type="entry name" value="Proteasome_A_N"/>
    <property type="match status" value="1"/>
</dbReference>
<dbReference type="SMART" id="SM00948">
    <property type="entry name" value="Proteasome_A_N"/>
    <property type="match status" value="1"/>
</dbReference>
<dbReference type="SUPFAM" id="SSF56235">
    <property type="entry name" value="N-terminal nucleophile aminohydrolases (Ntn hydrolases)"/>
    <property type="match status" value="1"/>
</dbReference>
<dbReference type="PROSITE" id="PS00388">
    <property type="entry name" value="PROTEASOME_ALPHA_1"/>
    <property type="match status" value="1"/>
</dbReference>
<dbReference type="PROSITE" id="PS51475">
    <property type="entry name" value="PROTEASOME_ALPHA_2"/>
    <property type="match status" value="1"/>
</dbReference>